<reference key="1">
    <citation type="journal article" date="2009" name="J. Bacteriol.">
        <title>Genomic sequencing reveals regulatory mutations and recombinational events in the widely used MC4100 lineage of Escherichia coli K-12.</title>
        <authorList>
            <person name="Ferenci T."/>
            <person name="Zhou Z."/>
            <person name="Betteridge T."/>
            <person name="Ren Y."/>
            <person name="Liu Y."/>
            <person name="Feng L."/>
            <person name="Reeves P.R."/>
            <person name="Wang L."/>
        </authorList>
    </citation>
    <scope>NUCLEOTIDE SEQUENCE [LARGE SCALE GENOMIC DNA]</scope>
    <source>
        <strain>K12 / MC4100 / BW2952</strain>
    </source>
</reference>
<gene>
    <name evidence="1" type="primary">lolB</name>
    <name type="ordered locus">BWG_1034</name>
</gene>
<comment type="function">
    <text evidence="1">Plays a critical role in the incorporation of lipoproteins in the outer membrane after they are released by the LolA protein.</text>
</comment>
<comment type="subunit">
    <text evidence="1">Monomer.</text>
</comment>
<comment type="subcellular location">
    <subcellularLocation>
        <location evidence="1">Cell outer membrane</location>
        <topology evidence="1">Lipid-anchor</topology>
    </subcellularLocation>
</comment>
<comment type="similarity">
    <text evidence="1">Belongs to the LolB family.</text>
</comment>
<name>LOLB_ECOBW</name>
<dbReference type="EMBL" id="CP001396">
    <property type="protein sequence ID" value="ACR62134.1"/>
    <property type="molecule type" value="Genomic_DNA"/>
</dbReference>
<dbReference type="RefSeq" id="WP_001130692.1">
    <property type="nucleotide sequence ID" value="NC_012759.1"/>
</dbReference>
<dbReference type="SMR" id="C4ZTQ0"/>
<dbReference type="GeneID" id="93775274"/>
<dbReference type="KEGG" id="ebw:BWG_1034"/>
<dbReference type="HOGENOM" id="CLU_092816_1_1_6"/>
<dbReference type="GO" id="GO:0009279">
    <property type="term" value="C:cell outer membrane"/>
    <property type="evidence" value="ECO:0007669"/>
    <property type="project" value="UniProtKB-SubCell"/>
</dbReference>
<dbReference type="GO" id="GO:0044874">
    <property type="term" value="P:lipoprotein localization to outer membrane"/>
    <property type="evidence" value="ECO:0007669"/>
    <property type="project" value="UniProtKB-UniRule"/>
</dbReference>
<dbReference type="GO" id="GO:0015031">
    <property type="term" value="P:protein transport"/>
    <property type="evidence" value="ECO:0007669"/>
    <property type="project" value="UniProtKB-KW"/>
</dbReference>
<dbReference type="CDD" id="cd16326">
    <property type="entry name" value="LolB"/>
    <property type="match status" value="1"/>
</dbReference>
<dbReference type="FunFam" id="2.50.20.10:FF:000002">
    <property type="entry name" value="Outer-membrane lipoprotein LolB"/>
    <property type="match status" value="1"/>
</dbReference>
<dbReference type="Gene3D" id="2.50.20.10">
    <property type="entry name" value="Lipoprotein localisation LolA/LolB/LppX"/>
    <property type="match status" value="1"/>
</dbReference>
<dbReference type="HAMAP" id="MF_00233">
    <property type="entry name" value="LolB"/>
    <property type="match status" value="1"/>
</dbReference>
<dbReference type="InterPro" id="IPR029046">
    <property type="entry name" value="LolA/LolB/LppX"/>
</dbReference>
<dbReference type="InterPro" id="IPR004565">
    <property type="entry name" value="OM_lipoprot_LolB"/>
</dbReference>
<dbReference type="NCBIfam" id="TIGR00548">
    <property type="entry name" value="lolB"/>
    <property type="match status" value="1"/>
</dbReference>
<dbReference type="Pfam" id="PF03550">
    <property type="entry name" value="LolB"/>
    <property type="match status" value="1"/>
</dbReference>
<dbReference type="SUPFAM" id="SSF89392">
    <property type="entry name" value="Prokaryotic lipoproteins and lipoprotein localization factors"/>
    <property type="match status" value="1"/>
</dbReference>
<dbReference type="PROSITE" id="PS51257">
    <property type="entry name" value="PROKAR_LIPOPROTEIN"/>
    <property type="match status" value="1"/>
</dbReference>
<evidence type="ECO:0000255" key="1">
    <source>
        <dbReference type="HAMAP-Rule" id="MF_00233"/>
    </source>
</evidence>
<feature type="signal peptide" evidence="1">
    <location>
        <begin position="1"/>
        <end position="21"/>
    </location>
</feature>
<feature type="chain" id="PRO_1000204384" description="Outer-membrane lipoprotein LolB">
    <location>
        <begin position="22"/>
        <end position="207"/>
    </location>
</feature>
<feature type="lipid moiety-binding region" description="N-palmitoyl cysteine" evidence="1">
    <location>
        <position position="22"/>
    </location>
</feature>
<feature type="lipid moiety-binding region" description="S-diacylglycerol cysteine" evidence="1">
    <location>
        <position position="22"/>
    </location>
</feature>
<accession>C4ZTQ0</accession>
<organism>
    <name type="scientific">Escherichia coli (strain K12 / MC4100 / BW2952)</name>
    <dbReference type="NCBI Taxonomy" id="595496"/>
    <lineage>
        <taxon>Bacteria</taxon>
        <taxon>Pseudomonadati</taxon>
        <taxon>Pseudomonadota</taxon>
        <taxon>Gammaproteobacteria</taxon>
        <taxon>Enterobacterales</taxon>
        <taxon>Enterobacteriaceae</taxon>
        <taxon>Escherichia</taxon>
    </lineage>
</organism>
<protein>
    <recommendedName>
        <fullName evidence="1">Outer-membrane lipoprotein LolB</fullName>
    </recommendedName>
</protein>
<sequence length="207" mass="23551">MPLPDFRLIRLLPLAALVLTACSVTTPKGPGKSPDSPQWRQHQQDVRNLNQYQTRGAFAYISDQQKVYARFFWQQTGQDRYRLLLTNPLGSTELELNAQPGNVQLVDNKGQRYTADDAEEMIGKLTGMPIPLNSLRQWILGLPGDATDYKLDDQYRLSEITYSQNGKNWKVVYGGYDTKTQPAMPANMELTDGGQRIKLKMDNWIVK</sequence>
<proteinExistence type="inferred from homology"/>
<keyword id="KW-0998">Cell outer membrane</keyword>
<keyword id="KW-0143">Chaperone</keyword>
<keyword id="KW-0449">Lipoprotein</keyword>
<keyword id="KW-0472">Membrane</keyword>
<keyword id="KW-0564">Palmitate</keyword>
<keyword id="KW-0653">Protein transport</keyword>
<keyword id="KW-0732">Signal</keyword>
<keyword id="KW-0813">Transport</keyword>